<proteinExistence type="inferred from homology"/>
<feature type="chain" id="PRO_0000245742" description="NADH-quinone oxidoreductase subunit I">
    <location>
        <begin position="1"/>
        <end position="180"/>
    </location>
</feature>
<feature type="domain" description="4Fe-4S ferredoxin-type 1" evidence="1">
    <location>
        <begin position="50"/>
        <end position="80"/>
    </location>
</feature>
<feature type="domain" description="4Fe-4S ferredoxin-type 2" evidence="1">
    <location>
        <begin position="90"/>
        <end position="119"/>
    </location>
</feature>
<feature type="binding site" evidence="1">
    <location>
        <position position="60"/>
    </location>
    <ligand>
        <name>[4Fe-4S] cluster</name>
        <dbReference type="ChEBI" id="CHEBI:49883"/>
        <label>1</label>
    </ligand>
</feature>
<feature type="binding site" evidence="1">
    <location>
        <position position="63"/>
    </location>
    <ligand>
        <name>[4Fe-4S] cluster</name>
        <dbReference type="ChEBI" id="CHEBI:49883"/>
        <label>1</label>
    </ligand>
</feature>
<feature type="binding site" evidence="1">
    <location>
        <position position="66"/>
    </location>
    <ligand>
        <name>[4Fe-4S] cluster</name>
        <dbReference type="ChEBI" id="CHEBI:49883"/>
        <label>1</label>
    </ligand>
</feature>
<feature type="binding site" evidence="1">
    <location>
        <position position="70"/>
    </location>
    <ligand>
        <name>[4Fe-4S] cluster</name>
        <dbReference type="ChEBI" id="CHEBI:49883"/>
        <label>2</label>
    </ligand>
</feature>
<feature type="binding site" evidence="1">
    <location>
        <position position="99"/>
    </location>
    <ligand>
        <name>[4Fe-4S] cluster</name>
        <dbReference type="ChEBI" id="CHEBI:49883"/>
        <label>2</label>
    </ligand>
</feature>
<feature type="binding site" evidence="1">
    <location>
        <position position="102"/>
    </location>
    <ligand>
        <name>[4Fe-4S] cluster</name>
        <dbReference type="ChEBI" id="CHEBI:49883"/>
        <label>2</label>
    </ligand>
</feature>
<feature type="binding site" evidence="1">
    <location>
        <position position="105"/>
    </location>
    <ligand>
        <name>[4Fe-4S] cluster</name>
        <dbReference type="ChEBI" id="CHEBI:49883"/>
        <label>2</label>
    </ligand>
</feature>
<feature type="binding site" evidence="1">
    <location>
        <position position="109"/>
    </location>
    <ligand>
        <name>[4Fe-4S] cluster</name>
        <dbReference type="ChEBI" id="CHEBI:49883"/>
        <label>1</label>
    </ligand>
</feature>
<keyword id="KW-0004">4Fe-4S</keyword>
<keyword id="KW-0997">Cell inner membrane</keyword>
<keyword id="KW-1003">Cell membrane</keyword>
<keyword id="KW-0408">Iron</keyword>
<keyword id="KW-0411">Iron-sulfur</keyword>
<keyword id="KW-0472">Membrane</keyword>
<keyword id="KW-0479">Metal-binding</keyword>
<keyword id="KW-0520">NAD</keyword>
<keyword id="KW-0874">Quinone</keyword>
<keyword id="KW-0677">Repeat</keyword>
<keyword id="KW-1278">Translocase</keyword>
<keyword id="KW-0830">Ubiquinone</keyword>
<evidence type="ECO:0000255" key="1">
    <source>
        <dbReference type="HAMAP-Rule" id="MF_01351"/>
    </source>
</evidence>
<organism>
    <name type="scientific">Salmonella paratyphi A (strain ATCC 9150 / SARB42)</name>
    <dbReference type="NCBI Taxonomy" id="295319"/>
    <lineage>
        <taxon>Bacteria</taxon>
        <taxon>Pseudomonadati</taxon>
        <taxon>Pseudomonadota</taxon>
        <taxon>Gammaproteobacteria</taxon>
        <taxon>Enterobacterales</taxon>
        <taxon>Enterobacteriaceae</taxon>
        <taxon>Salmonella</taxon>
    </lineage>
</organism>
<gene>
    <name evidence="1" type="primary">nuoI</name>
    <name type="ordered locus">SPA0543</name>
</gene>
<comment type="function">
    <text evidence="1">NDH-1 shuttles electrons from NADH, via FMN and iron-sulfur (Fe-S) centers, to quinones in the respiratory chain. The immediate electron acceptor for the enzyme in this species is believed to be ubiquinone. Couples the redox reaction to proton translocation (for every two electrons transferred, four hydrogen ions are translocated across the cytoplasmic membrane), and thus conserves the redox energy in a proton gradient.</text>
</comment>
<comment type="catalytic activity">
    <reaction evidence="1">
        <text>a quinone + NADH + 5 H(+)(in) = a quinol + NAD(+) + 4 H(+)(out)</text>
        <dbReference type="Rhea" id="RHEA:57888"/>
        <dbReference type="ChEBI" id="CHEBI:15378"/>
        <dbReference type="ChEBI" id="CHEBI:24646"/>
        <dbReference type="ChEBI" id="CHEBI:57540"/>
        <dbReference type="ChEBI" id="CHEBI:57945"/>
        <dbReference type="ChEBI" id="CHEBI:132124"/>
    </reaction>
</comment>
<comment type="cofactor">
    <cofactor evidence="1">
        <name>[4Fe-4S] cluster</name>
        <dbReference type="ChEBI" id="CHEBI:49883"/>
    </cofactor>
    <text evidence="1">Binds 2 [4Fe-4S] clusters per subunit.</text>
</comment>
<comment type="subunit">
    <text evidence="1">NDH-1 is composed of 13 different subunits. Subunits NuoA, H, J, K, L, M, N constitute the membrane sector of the complex.</text>
</comment>
<comment type="subcellular location">
    <subcellularLocation>
        <location evidence="1">Cell inner membrane</location>
        <topology evidence="1">Peripheral membrane protein</topology>
    </subcellularLocation>
</comment>
<comment type="similarity">
    <text evidence="1">Belongs to the complex I 23 kDa subunit family.</text>
</comment>
<sequence length="180" mass="20520">MTLKELLVGFGTQVRSIWMIGLHAFAKRETRMYPEEPVYLPPRYRGRIVLTRDPDGEERCVACNLCAVACPVGCISLQKAETKDGRWYPEFFRINFSRCIFCGLCEEACPTTAIQLTPDFELGEYKRQDLVYEKEDLLISGPGKYPEYNFYRMAGMAIDGKDKGEAENEAKPIDVKSLLP</sequence>
<dbReference type="EC" id="7.1.1.-" evidence="1"/>
<dbReference type="EMBL" id="CP000026">
    <property type="protein sequence ID" value="AAV76545.1"/>
    <property type="molecule type" value="Genomic_DNA"/>
</dbReference>
<dbReference type="RefSeq" id="WP_000172747.1">
    <property type="nucleotide sequence ID" value="NC_006511.1"/>
</dbReference>
<dbReference type="SMR" id="Q5PN58"/>
<dbReference type="KEGG" id="spt:SPA0543"/>
<dbReference type="HOGENOM" id="CLU_067218_4_3_6"/>
<dbReference type="Proteomes" id="UP000008185">
    <property type="component" value="Chromosome"/>
</dbReference>
<dbReference type="GO" id="GO:0005886">
    <property type="term" value="C:plasma membrane"/>
    <property type="evidence" value="ECO:0007669"/>
    <property type="project" value="UniProtKB-SubCell"/>
</dbReference>
<dbReference type="GO" id="GO:0051539">
    <property type="term" value="F:4 iron, 4 sulfur cluster binding"/>
    <property type="evidence" value="ECO:0007669"/>
    <property type="project" value="UniProtKB-KW"/>
</dbReference>
<dbReference type="GO" id="GO:0005506">
    <property type="term" value="F:iron ion binding"/>
    <property type="evidence" value="ECO:0007669"/>
    <property type="project" value="UniProtKB-UniRule"/>
</dbReference>
<dbReference type="GO" id="GO:0050136">
    <property type="term" value="F:NADH:ubiquinone reductase (non-electrogenic) activity"/>
    <property type="evidence" value="ECO:0007669"/>
    <property type="project" value="UniProtKB-UniRule"/>
</dbReference>
<dbReference type="GO" id="GO:0048038">
    <property type="term" value="F:quinone binding"/>
    <property type="evidence" value="ECO:0007669"/>
    <property type="project" value="UniProtKB-KW"/>
</dbReference>
<dbReference type="GO" id="GO:0009060">
    <property type="term" value="P:aerobic respiration"/>
    <property type="evidence" value="ECO:0007669"/>
    <property type="project" value="TreeGrafter"/>
</dbReference>
<dbReference type="FunFam" id="3.30.70.3270:FF:000002">
    <property type="entry name" value="NADH-quinone oxidoreductase subunit I"/>
    <property type="match status" value="1"/>
</dbReference>
<dbReference type="Gene3D" id="3.30.70.3270">
    <property type="match status" value="1"/>
</dbReference>
<dbReference type="HAMAP" id="MF_01351">
    <property type="entry name" value="NDH1_NuoI"/>
    <property type="match status" value="1"/>
</dbReference>
<dbReference type="InterPro" id="IPR017896">
    <property type="entry name" value="4Fe4S_Fe-S-bd"/>
</dbReference>
<dbReference type="InterPro" id="IPR017900">
    <property type="entry name" value="4Fe4S_Fe_S_CS"/>
</dbReference>
<dbReference type="InterPro" id="IPR010226">
    <property type="entry name" value="NADH_quinone_OxRdtase_chainI"/>
</dbReference>
<dbReference type="NCBIfam" id="TIGR01971">
    <property type="entry name" value="NuoI"/>
    <property type="match status" value="1"/>
</dbReference>
<dbReference type="NCBIfam" id="NF004536">
    <property type="entry name" value="PRK05888.1-1"/>
    <property type="match status" value="1"/>
</dbReference>
<dbReference type="PANTHER" id="PTHR10849:SF20">
    <property type="entry name" value="NADH DEHYDROGENASE [UBIQUINONE] IRON-SULFUR PROTEIN 8, MITOCHONDRIAL"/>
    <property type="match status" value="1"/>
</dbReference>
<dbReference type="PANTHER" id="PTHR10849">
    <property type="entry name" value="NADH DEHYDROGENASE UBIQUINONE IRON-SULFUR PROTEIN 8, MITOCHONDRIAL"/>
    <property type="match status" value="1"/>
</dbReference>
<dbReference type="Pfam" id="PF12838">
    <property type="entry name" value="Fer4_7"/>
    <property type="match status" value="1"/>
</dbReference>
<dbReference type="SUPFAM" id="SSF54862">
    <property type="entry name" value="4Fe-4S ferredoxins"/>
    <property type="match status" value="1"/>
</dbReference>
<dbReference type="PROSITE" id="PS00198">
    <property type="entry name" value="4FE4S_FER_1"/>
    <property type="match status" value="2"/>
</dbReference>
<dbReference type="PROSITE" id="PS51379">
    <property type="entry name" value="4FE4S_FER_2"/>
    <property type="match status" value="2"/>
</dbReference>
<name>NUOI_SALPA</name>
<protein>
    <recommendedName>
        <fullName evidence="1">NADH-quinone oxidoreductase subunit I</fullName>
        <ecNumber evidence="1">7.1.1.-</ecNumber>
    </recommendedName>
    <alternativeName>
        <fullName evidence="1">NADH dehydrogenase I subunit I</fullName>
    </alternativeName>
    <alternativeName>
        <fullName evidence="1">NDH-1 subunit I</fullName>
    </alternativeName>
</protein>
<reference key="1">
    <citation type="journal article" date="2004" name="Nat. Genet.">
        <title>Comparison of genome degradation in Paratyphi A and Typhi, human-restricted serovars of Salmonella enterica that cause typhoid.</title>
        <authorList>
            <person name="McClelland M."/>
            <person name="Sanderson K.E."/>
            <person name="Clifton S.W."/>
            <person name="Latreille P."/>
            <person name="Porwollik S."/>
            <person name="Sabo A."/>
            <person name="Meyer R."/>
            <person name="Bieri T."/>
            <person name="Ozersky P."/>
            <person name="McLellan M."/>
            <person name="Harkins C.R."/>
            <person name="Wang C."/>
            <person name="Nguyen C."/>
            <person name="Berghoff A."/>
            <person name="Elliott G."/>
            <person name="Kohlberg S."/>
            <person name="Strong C."/>
            <person name="Du F."/>
            <person name="Carter J."/>
            <person name="Kremizki C."/>
            <person name="Layman D."/>
            <person name="Leonard S."/>
            <person name="Sun H."/>
            <person name="Fulton L."/>
            <person name="Nash W."/>
            <person name="Miner T."/>
            <person name="Minx P."/>
            <person name="Delehaunty K."/>
            <person name="Fronick C."/>
            <person name="Magrini V."/>
            <person name="Nhan M."/>
            <person name="Warren W."/>
            <person name="Florea L."/>
            <person name="Spieth J."/>
            <person name="Wilson R.K."/>
        </authorList>
    </citation>
    <scope>NUCLEOTIDE SEQUENCE [LARGE SCALE GENOMIC DNA]</scope>
    <source>
        <strain>ATCC 9150 / SARB42</strain>
    </source>
</reference>
<accession>Q5PN58</accession>